<sequence>MADKAILWALISASTKEGRKACSLSYFACKAAEAELGLAYMAANDNKEFLTSLSNIMRYKIDAGLSESYTCYLLSKGKIIRPYLKNLNPLQLAADCIETVNKIKDKNKKNH</sequence>
<protein>
    <recommendedName>
        <fullName>Protein YibV</fullName>
    </recommendedName>
</protein>
<evidence type="ECO:0000305" key="1"/>
<dbReference type="EMBL" id="U00096">
    <property type="protein sequence ID" value="AYC08249.1"/>
    <property type="molecule type" value="Genomic_DNA"/>
</dbReference>
<dbReference type="SMR" id="A5A625"/>
<dbReference type="EnsemblBacteria" id="AYC08249">
    <property type="protein sequence ID" value="AYC08249"/>
    <property type="gene ID" value="b4615"/>
</dbReference>
<dbReference type="InParanoid" id="A5A625"/>
<dbReference type="OMA" id="VCNDEDW"/>
<dbReference type="OrthoDB" id="9180843at2"/>
<dbReference type="BioCyc" id="EcoCyc:MONOMER0-2827"/>
<dbReference type="PRO" id="PR:A5A625"/>
<dbReference type="Proteomes" id="UP000000625">
    <property type="component" value="Chromosome"/>
</dbReference>
<dbReference type="InterPro" id="IPR028955">
    <property type="entry name" value="Imm57"/>
</dbReference>
<dbReference type="Pfam" id="PF15596">
    <property type="entry name" value="Imm57"/>
    <property type="match status" value="1"/>
</dbReference>
<accession>A5A625</accession>
<accession>A0A385XJN4</accession>
<comment type="miscellaneous">
    <text evidence="1">May be missing up to 40 C-terminal residues compared to orthologs.</text>
</comment>
<proteinExistence type="predicted"/>
<organism>
    <name type="scientific">Escherichia coli (strain K12)</name>
    <dbReference type="NCBI Taxonomy" id="83333"/>
    <lineage>
        <taxon>Bacteria</taxon>
        <taxon>Pseudomonadati</taxon>
        <taxon>Pseudomonadota</taxon>
        <taxon>Gammaproteobacteria</taxon>
        <taxon>Enterobacterales</taxon>
        <taxon>Enterobacteriaceae</taxon>
        <taxon>Escherichia</taxon>
    </lineage>
</organism>
<feature type="chain" id="PRO_0000311861" description="Protein YibV">
    <location>
        <begin position="1"/>
        <end position="111"/>
    </location>
</feature>
<gene>
    <name type="primary">yibV</name>
    <name type="ordered locus">b4615</name>
</gene>
<reference key="1">
    <citation type="journal article" date="1997" name="Science">
        <title>The complete genome sequence of Escherichia coli K-12.</title>
        <authorList>
            <person name="Blattner F.R."/>
            <person name="Plunkett G. III"/>
            <person name="Bloch C.A."/>
            <person name="Perna N.T."/>
            <person name="Burland V."/>
            <person name="Riley M."/>
            <person name="Collado-Vides J."/>
            <person name="Glasner J.D."/>
            <person name="Rode C.K."/>
            <person name="Mayhew G.F."/>
            <person name="Gregor J."/>
            <person name="Davis N.W."/>
            <person name="Kirkpatrick H.A."/>
            <person name="Goeden M.A."/>
            <person name="Rose D.J."/>
            <person name="Mau B."/>
            <person name="Shao Y."/>
        </authorList>
    </citation>
    <scope>NUCLEOTIDE SEQUENCE [LARGE SCALE GENOMIC DNA]</scope>
    <source>
        <strain>K12 / MG1655 / ATCC 47076</strain>
    </source>
</reference>
<keyword id="KW-1185">Reference proteome</keyword>
<name>YIBV_ECOLI</name>